<feature type="chain" id="PRO_0000095956" description="Protein translocase subunit SecD">
    <location>
        <begin position="1"/>
        <end position="501"/>
    </location>
</feature>
<feature type="transmembrane region" description="Helical" evidence="1">
    <location>
        <begin position="9"/>
        <end position="29"/>
    </location>
</feature>
<feature type="transmembrane region" description="Helical" evidence="1">
    <location>
        <begin position="339"/>
        <end position="359"/>
    </location>
</feature>
<feature type="transmembrane region" description="Helical" evidence="1">
    <location>
        <begin position="371"/>
        <end position="391"/>
    </location>
</feature>
<feature type="transmembrane region" description="Helical" evidence="1">
    <location>
        <begin position="394"/>
        <end position="414"/>
    </location>
</feature>
<feature type="transmembrane region" description="Helical" evidence="1">
    <location>
        <begin position="447"/>
        <end position="467"/>
    </location>
</feature>
<feature type="transmembrane region" description="Helical" evidence="1">
    <location>
        <begin position="470"/>
        <end position="490"/>
    </location>
</feature>
<gene>
    <name evidence="1" type="primary">secD</name>
    <name type="ordered locus">aq_973</name>
</gene>
<name>SECD_AQUAE</name>
<reference key="1">
    <citation type="journal article" date="1998" name="Nature">
        <title>The complete genome of the hyperthermophilic bacterium Aquifex aeolicus.</title>
        <authorList>
            <person name="Deckert G."/>
            <person name="Warren P.V."/>
            <person name="Gaasterland T."/>
            <person name="Young W.G."/>
            <person name="Lenox A.L."/>
            <person name="Graham D.E."/>
            <person name="Overbeek R."/>
            <person name="Snead M.A."/>
            <person name="Keller M."/>
            <person name="Aujay M."/>
            <person name="Huber R."/>
            <person name="Feldman R.A."/>
            <person name="Short J.M."/>
            <person name="Olsen G.J."/>
            <person name="Swanson R.V."/>
        </authorList>
    </citation>
    <scope>NUCLEOTIDE SEQUENCE [LARGE SCALE GENOMIC DNA]</scope>
    <source>
        <strain>VF5</strain>
    </source>
</reference>
<evidence type="ECO:0000255" key="1">
    <source>
        <dbReference type="HAMAP-Rule" id="MF_01463"/>
    </source>
</evidence>
<protein>
    <recommendedName>
        <fullName evidence="1">Protein translocase subunit SecD</fullName>
    </recommendedName>
</protein>
<organism>
    <name type="scientific">Aquifex aeolicus (strain VF5)</name>
    <dbReference type="NCBI Taxonomy" id="224324"/>
    <lineage>
        <taxon>Bacteria</taxon>
        <taxon>Pseudomonadati</taxon>
        <taxon>Aquificota</taxon>
        <taxon>Aquificia</taxon>
        <taxon>Aquificales</taxon>
        <taxon>Aquificaceae</taxon>
        <taxon>Aquifex</taxon>
    </lineage>
</organism>
<keyword id="KW-0997">Cell inner membrane</keyword>
<keyword id="KW-1003">Cell membrane</keyword>
<keyword id="KW-0472">Membrane</keyword>
<keyword id="KW-0653">Protein transport</keyword>
<keyword id="KW-1185">Reference proteome</keyword>
<keyword id="KW-0811">Translocation</keyword>
<keyword id="KW-0812">Transmembrane</keyword>
<keyword id="KW-1133">Transmembrane helix</keyword>
<keyword id="KW-0813">Transport</keyword>
<comment type="function">
    <text evidence="1">Part of the Sec protein translocase complex. Interacts with the SecYEG preprotein conducting channel. SecDF uses the proton motive force (PMF) to complete protein translocation after the ATP-dependent function of SecA.</text>
</comment>
<comment type="subunit">
    <text evidence="1">Forms a complex with SecF. Part of the essential Sec protein translocation apparatus which comprises SecA, SecYEG and auxiliary proteins SecDF. Other proteins may also be involved.</text>
</comment>
<comment type="subcellular location">
    <subcellularLocation>
        <location evidence="1">Cell inner membrane</location>
        <topology evidence="1">Multi-pass membrane protein</topology>
    </subcellularLocation>
</comment>
<comment type="similarity">
    <text evidence="1">Belongs to the SecD/SecF family. SecD subfamily.</text>
</comment>
<proteinExistence type="inferred from homology"/>
<accession>O67102</accession>
<dbReference type="EMBL" id="AE000657">
    <property type="protein sequence ID" value="AAC07060.1"/>
    <property type="molecule type" value="Genomic_DNA"/>
</dbReference>
<dbReference type="PIR" id="C70384">
    <property type="entry name" value="C70384"/>
</dbReference>
<dbReference type="RefSeq" id="NP_213665.1">
    <property type="nucleotide sequence ID" value="NC_000918.1"/>
</dbReference>
<dbReference type="RefSeq" id="WP_010880603.1">
    <property type="nucleotide sequence ID" value="NC_000918.1"/>
</dbReference>
<dbReference type="SMR" id="O67102"/>
<dbReference type="FunCoup" id="O67102">
    <property type="interactions" value="249"/>
</dbReference>
<dbReference type="STRING" id="224324.aq_973"/>
<dbReference type="EnsemblBacteria" id="AAC07060">
    <property type="protein sequence ID" value="AAC07060"/>
    <property type="gene ID" value="aq_973"/>
</dbReference>
<dbReference type="KEGG" id="aae:aq_973"/>
<dbReference type="PATRIC" id="fig|224324.8.peg.765"/>
<dbReference type="eggNOG" id="COG0342">
    <property type="taxonomic scope" value="Bacteria"/>
</dbReference>
<dbReference type="HOGENOM" id="CLU_007894_4_3_0"/>
<dbReference type="InParanoid" id="O67102"/>
<dbReference type="OrthoDB" id="9805019at2"/>
<dbReference type="Proteomes" id="UP000000798">
    <property type="component" value="Chromosome"/>
</dbReference>
<dbReference type="GO" id="GO:0005886">
    <property type="term" value="C:plasma membrane"/>
    <property type="evidence" value="ECO:0000318"/>
    <property type="project" value="GO_Central"/>
</dbReference>
<dbReference type="GO" id="GO:0015450">
    <property type="term" value="F:protein-transporting ATPase activity"/>
    <property type="evidence" value="ECO:0007669"/>
    <property type="project" value="InterPro"/>
</dbReference>
<dbReference type="GO" id="GO:0065002">
    <property type="term" value="P:intracellular protein transmembrane transport"/>
    <property type="evidence" value="ECO:0007669"/>
    <property type="project" value="UniProtKB-UniRule"/>
</dbReference>
<dbReference type="GO" id="GO:0006605">
    <property type="term" value="P:protein targeting"/>
    <property type="evidence" value="ECO:0007669"/>
    <property type="project" value="UniProtKB-UniRule"/>
</dbReference>
<dbReference type="GO" id="GO:0015031">
    <property type="term" value="P:protein transport"/>
    <property type="evidence" value="ECO:0000318"/>
    <property type="project" value="GO_Central"/>
</dbReference>
<dbReference type="GO" id="GO:0043952">
    <property type="term" value="P:protein transport by the Sec complex"/>
    <property type="evidence" value="ECO:0007669"/>
    <property type="project" value="UniProtKB-UniRule"/>
</dbReference>
<dbReference type="FunFam" id="1.20.1640.10:FF:000004">
    <property type="entry name" value="Protein translocase subunit SecD"/>
    <property type="match status" value="1"/>
</dbReference>
<dbReference type="Gene3D" id="3.30.1360.200">
    <property type="match status" value="1"/>
</dbReference>
<dbReference type="Gene3D" id="3.30.70.3400">
    <property type="match status" value="2"/>
</dbReference>
<dbReference type="Gene3D" id="1.20.1640.10">
    <property type="entry name" value="Multidrug efflux transporter AcrB transmembrane domain"/>
    <property type="match status" value="1"/>
</dbReference>
<dbReference type="HAMAP" id="MF_01463_B">
    <property type="entry name" value="SecD_B"/>
    <property type="match status" value="1"/>
</dbReference>
<dbReference type="InterPro" id="IPR005791">
    <property type="entry name" value="SecD"/>
</dbReference>
<dbReference type="InterPro" id="IPR022813">
    <property type="entry name" value="SecD/SecF_arch_bac"/>
</dbReference>
<dbReference type="InterPro" id="IPR022646">
    <property type="entry name" value="SecD/SecF_CS"/>
</dbReference>
<dbReference type="InterPro" id="IPR048631">
    <property type="entry name" value="SecD_1st"/>
</dbReference>
<dbReference type="InterPro" id="IPR048634">
    <property type="entry name" value="SecD_SecF_C"/>
</dbReference>
<dbReference type="InterPro" id="IPR055344">
    <property type="entry name" value="SecD_SecF_C_bact"/>
</dbReference>
<dbReference type="InterPro" id="IPR054384">
    <property type="entry name" value="SecDF_P1_head"/>
</dbReference>
<dbReference type="NCBIfam" id="TIGR00916">
    <property type="entry name" value="2A0604s01"/>
    <property type="match status" value="1"/>
</dbReference>
<dbReference type="NCBIfam" id="TIGR01129">
    <property type="entry name" value="secD"/>
    <property type="match status" value="1"/>
</dbReference>
<dbReference type="PANTHER" id="PTHR30081:SF1">
    <property type="entry name" value="PROTEIN TRANSLOCASE SUBUNIT SECD"/>
    <property type="match status" value="1"/>
</dbReference>
<dbReference type="PANTHER" id="PTHR30081">
    <property type="entry name" value="PROTEIN-EXPORT MEMBRANE PROTEIN SEC"/>
    <property type="match status" value="1"/>
</dbReference>
<dbReference type="Pfam" id="PF07549">
    <property type="entry name" value="Sec_GG"/>
    <property type="match status" value="1"/>
</dbReference>
<dbReference type="Pfam" id="PF21760">
    <property type="entry name" value="SecD_1st"/>
    <property type="match status" value="1"/>
</dbReference>
<dbReference type="Pfam" id="PF02355">
    <property type="entry name" value="SecD_SecF_C"/>
    <property type="match status" value="1"/>
</dbReference>
<dbReference type="Pfam" id="PF22599">
    <property type="entry name" value="SecDF_P1_head"/>
    <property type="match status" value="1"/>
</dbReference>
<dbReference type="SUPFAM" id="SSF82866">
    <property type="entry name" value="Multidrug efflux transporter AcrB transmembrane domain"/>
    <property type="match status" value="1"/>
</dbReference>
<sequence>MILIMQKKNLWLHLLGLVILTLLSAYAVVKYPINLGLDLKGGVEFLLEPDFSVAIEREYEDLARNLREKLSKFNVLEVYATKEGVIIELLDKKEVENIKKVIQDINPNVIFEEEGDKLVVKFTQKYVEQLKEDIVRQSIEIIRDRIDKLGVTQPVVTRVGKYRILVDLPGFLDVERAKKIIGSTASLELKLVIDVSTDRKELEKKLTPDREILPSRDGREWFLVEKAPVITGQDLKTAYVGVDNLGQPAVNFELKGEAAEKFGKFTEQNIGKRLAIVLDRKVVSAPVIRSKISDRGQITGNFTAQEARDLALILRTGSLPSPLKFLQEKIVGPSLGKDAIEQGIKAGILAIILLAVVLIARYKTAGITANISIFLNVLFLLASMAFLGATLTLPGIAGIILNMGIAVDSNVLIFERVKEELRLGNTVSKAIELGFKRTLSAVWDTHVTLLVASVILFQFGSGPVKGFATTLALGTIASFISNVYYAKVFLDLLNSLKILKI</sequence>